<protein>
    <recommendedName>
        <fullName>E3 ubiquitin-protein ligase TRIM8</fullName>
        <ecNumber>2.3.2.27</ecNumber>
    </recommendedName>
    <alternativeName>
        <fullName>Glioblastoma-expressed RING finger protein</fullName>
    </alternativeName>
    <alternativeName>
        <fullName>RING finger protein 27</fullName>
    </alternativeName>
    <alternativeName>
        <fullName evidence="15">RING-type E3 ubiquitin transferase TRIM8</fullName>
    </alternativeName>
    <alternativeName>
        <fullName>Tripartite motif-containing protein 8</fullName>
    </alternativeName>
</protein>
<accession>Q9BZR9</accession>
<accession>A6NI31</accession>
<accession>Q9C028</accession>
<evidence type="ECO:0000250" key="1">
    <source>
        <dbReference type="UniProtKB" id="Q99PJ2"/>
    </source>
</evidence>
<evidence type="ECO:0000255" key="2"/>
<evidence type="ECO:0000255" key="3">
    <source>
        <dbReference type="PROSITE-ProRule" id="PRU00175"/>
    </source>
</evidence>
<evidence type="ECO:0000269" key="4">
    <source>
    </source>
</evidence>
<evidence type="ECO:0000269" key="5">
    <source>
    </source>
</evidence>
<evidence type="ECO:0000269" key="6">
    <source>
    </source>
</evidence>
<evidence type="ECO:0000269" key="7">
    <source>
    </source>
</evidence>
<evidence type="ECO:0000269" key="8">
    <source>
    </source>
</evidence>
<evidence type="ECO:0000269" key="9">
    <source>
    </source>
</evidence>
<evidence type="ECO:0000269" key="10">
    <source>
    </source>
</evidence>
<evidence type="ECO:0000269" key="11">
    <source>
    </source>
</evidence>
<evidence type="ECO:0000269" key="12">
    <source>
    </source>
</evidence>
<evidence type="ECO:0000269" key="13">
    <source>
    </source>
</evidence>
<evidence type="ECO:0000269" key="14">
    <source>
    </source>
</evidence>
<evidence type="ECO:0000305" key="15"/>
<keyword id="KW-0175">Coiled coil</keyword>
<keyword id="KW-0963">Cytoplasm</keyword>
<keyword id="KW-0225">Disease variant</keyword>
<keyword id="KW-0391">Immunity</keyword>
<keyword id="KW-0399">Innate immunity</keyword>
<keyword id="KW-0479">Metal-binding</keyword>
<keyword id="KW-0539">Nucleus</keyword>
<keyword id="KW-1267">Proteomics identification</keyword>
<keyword id="KW-1185">Reference proteome</keyword>
<keyword id="KW-0677">Repeat</keyword>
<keyword id="KW-0808">Transferase</keyword>
<keyword id="KW-0833">Ubl conjugation pathway</keyword>
<keyword id="KW-0862">Zinc</keyword>
<keyword id="KW-0863">Zinc-finger</keyword>
<reference key="1">
    <citation type="journal article" date="2000" name="Biochem. Biophys. Res. Commun.">
        <title>A novel RING finger-B box-coiled-coil protein, GERP.</title>
        <authorList>
            <person name="Vincent S.R."/>
            <person name="Kwasnicka D.A."/>
            <person name="Fretier P."/>
        </authorList>
    </citation>
    <scope>NUCLEOTIDE SEQUENCE [MRNA]</scope>
    <source>
        <tissue>Brain</tissue>
    </source>
</reference>
<reference key="2">
    <citation type="journal article" date="2001" name="EMBO J.">
        <title>The tripartite motif family identifies cell compartments.</title>
        <authorList>
            <person name="Reymond A."/>
            <person name="Meroni G."/>
            <person name="Fantozzi A."/>
            <person name="Merla G."/>
            <person name="Cairo S."/>
            <person name="Luzi L."/>
            <person name="Riganelli D."/>
            <person name="Zanaria E."/>
            <person name="Messali S."/>
            <person name="Cainarca S."/>
            <person name="Guffanti A."/>
            <person name="Minucci S."/>
            <person name="Pelicci P.G."/>
            <person name="Ballabio A."/>
        </authorList>
    </citation>
    <scope>NUCLEOTIDE SEQUENCE [MRNA]</scope>
    <source>
        <tissue>Neuron</tissue>
    </source>
</reference>
<reference key="3">
    <citation type="journal article" date="2004" name="Nature">
        <title>The DNA sequence and comparative analysis of human chromosome 10.</title>
        <authorList>
            <person name="Deloukas P."/>
            <person name="Earthrowl M.E."/>
            <person name="Grafham D.V."/>
            <person name="Rubenfield M."/>
            <person name="French L."/>
            <person name="Steward C.A."/>
            <person name="Sims S.K."/>
            <person name="Jones M.C."/>
            <person name="Searle S."/>
            <person name="Scott C."/>
            <person name="Howe K."/>
            <person name="Hunt S.E."/>
            <person name="Andrews T.D."/>
            <person name="Gilbert J.G.R."/>
            <person name="Swarbreck D."/>
            <person name="Ashurst J.L."/>
            <person name="Taylor A."/>
            <person name="Battles J."/>
            <person name="Bird C.P."/>
            <person name="Ainscough R."/>
            <person name="Almeida J.P."/>
            <person name="Ashwell R.I.S."/>
            <person name="Ambrose K.D."/>
            <person name="Babbage A.K."/>
            <person name="Bagguley C.L."/>
            <person name="Bailey J."/>
            <person name="Banerjee R."/>
            <person name="Bates K."/>
            <person name="Beasley H."/>
            <person name="Bray-Allen S."/>
            <person name="Brown A.J."/>
            <person name="Brown J.Y."/>
            <person name="Burford D.C."/>
            <person name="Burrill W."/>
            <person name="Burton J."/>
            <person name="Cahill P."/>
            <person name="Camire D."/>
            <person name="Carter N.P."/>
            <person name="Chapman J.C."/>
            <person name="Clark S.Y."/>
            <person name="Clarke G."/>
            <person name="Clee C.M."/>
            <person name="Clegg S."/>
            <person name="Corby N."/>
            <person name="Coulson A."/>
            <person name="Dhami P."/>
            <person name="Dutta I."/>
            <person name="Dunn M."/>
            <person name="Faulkner L."/>
            <person name="Frankish A."/>
            <person name="Frankland J.A."/>
            <person name="Garner P."/>
            <person name="Garnett J."/>
            <person name="Gribble S."/>
            <person name="Griffiths C."/>
            <person name="Grocock R."/>
            <person name="Gustafson E."/>
            <person name="Hammond S."/>
            <person name="Harley J.L."/>
            <person name="Hart E."/>
            <person name="Heath P.D."/>
            <person name="Ho T.P."/>
            <person name="Hopkins B."/>
            <person name="Horne J."/>
            <person name="Howden P.J."/>
            <person name="Huckle E."/>
            <person name="Hynds C."/>
            <person name="Johnson C."/>
            <person name="Johnson D."/>
            <person name="Kana A."/>
            <person name="Kay M."/>
            <person name="Kimberley A.M."/>
            <person name="Kershaw J.K."/>
            <person name="Kokkinaki M."/>
            <person name="Laird G.K."/>
            <person name="Lawlor S."/>
            <person name="Lee H.M."/>
            <person name="Leongamornlert D.A."/>
            <person name="Laird G."/>
            <person name="Lloyd C."/>
            <person name="Lloyd D.M."/>
            <person name="Loveland J."/>
            <person name="Lovell J."/>
            <person name="McLaren S."/>
            <person name="McLay K.E."/>
            <person name="McMurray A."/>
            <person name="Mashreghi-Mohammadi M."/>
            <person name="Matthews L."/>
            <person name="Milne S."/>
            <person name="Nickerson T."/>
            <person name="Nguyen M."/>
            <person name="Overton-Larty E."/>
            <person name="Palmer S.A."/>
            <person name="Pearce A.V."/>
            <person name="Peck A.I."/>
            <person name="Pelan S."/>
            <person name="Phillimore B."/>
            <person name="Porter K."/>
            <person name="Rice C.M."/>
            <person name="Rogosin A."/>
            <person name="Ross M.T."/>
            <person name="Sarafidou T."/>
            <person name="Sehra H.K."/>
            <person name="Shownkeen R."/>
            <person name="Skuce C.D."/>
            <person name="Smith M."/>
            <person name="Standring L."/>
            <person name="Sycamore N."/>
            <person name="Tester J."/>
            <person name="Thorpe A."/>
            <person name="Torcasso W."/>
            <person name="Tracey A."/>
            <person name="Tromans A."/>
            <person name="Tsolas J."/>
            <person name="Wall M."/>
            <person name="Walsh J."/>
            <person name="Wang H."/>
            <person name="Weinstock K."/>
            <person name="West A.P."/>
            <person name="Willey D.L."/>
            <person name="Whitehead S.L."/>
            <person name="Wilming L."/>
            <person name="Wray P.W."/>
            <person name="Young L."/>
            <person name="Chen Y."/>
            <person name="Lovering R.C."/>
            <person name="Moschonas N.K."/>
            <person name="Siebert R."/>
            <person name="Fechtel K."/>
            <person name="Bentley D."/>
            <person name="Durbin R.M."/>
            <person name="Hubbard T."/>
            <person name="Doucette-Stamm L."/>
            <person name="Beck S."/>
            <person name="Smith D.R."/>
            <person name="Rogers J."/>
        </authorList>
    </citation>
    <scope>NUCLEOTIDE SEQUENCE [LARGE SCALE GENOMIC DNA]</scope>
</reference>
<reference key="4">
    <citation type="submission" date="2005-09" db="EMBL/GenBank/DDBJ databases">
        <authorList>
            <person name="Mural R.J."/>
            <person name="Istrail S."/>
            <person name="Sutton G.G."/>
            <person name="Florea L."/>
            <person name="Halpern A.L."/>
            <person name="Mobarry C.M."/>
            <person name="Lippert R."/>
            <person name="Walenz B."/>
            <person name="Shatkay H."/>
            <person name="Dew I."/>
            <person name="Miller J.R."/>
            <person name="Flanigan M.J."/>
            <person name="Edwards N.J."/>
            <person name="Bolanos R."/>
            <person name="Fasulo D."/>
            <person name="Halldorsson B.V."/>
            <person name="Hannenhalli S."/>
            <person name="Turner R."/>
            <person name="Yooseph S."/>
            <person name="Lu F."/>
            <person name="Nusskern D.R."/>
            <person name="Shue B.C."/>
            <person name="Zheng X.H."/>
            <person name="Zhong F."/>
            <person name="Delcher A.L."/>
            <person name="Huson D.H."/>
            <person name="Kravitz S.A."/>
            <person name="Mouchard L."/>
            <person name="Reinert K."/>
            <person name="Remington K.A."/>
            <person name="Clark A.G."/>
            <person name="Waterman M.S."/>
            <person name="Eichler E.E."/>
            <person name="Adams M.D."/>
            <person name="Hunkapiller M.W."/>
            <person name="Myers E.W."/>
            <person name="Venter J.C."/>
        </authorList>
    </citation>
    <scope>NUCLEOTIDE SEQUENCE [LARGE SCALE GENOMIC DNA]</scope>
</reference>
<reference key="5">
    <citation type="journal article" date="2004" name="Genome Res.">
        <title>The status, quality, and expansion of the NIH full-length cDNA project: the Mammalian Gene Collection (MGC).</title>
        <authorList>
            <consortium name="The MGC Project Team"/>
        </authorList>
    </citation>
    <scope>NUCLEOTIDE SEQUENCE [LARGE SCALE MRNA]</scope>
    <source>
        <tissue>Colon</tissue>
    </source>
</reference>
<reference key="6">
    <citation type="journal article" date="2002" name="J. Biol. Chem.">
        <title>TRIM8/GERP RING finger protein interacts with SOCS-1.</title>
        <authorList>
            <person name="Toniato E."/>
            <person name="Chen X.P."/>
            <person name="Losman J."/>
            <person name="Flati V."/>
            <person name="Donahue L."/>
            <person name="Rothman P."/>
        </authorList>
    </citation>
    <scope>FUNCTION</scope>
    <scope>INTERACTION WITH SOCS1</scope>
</reference>
<reference key="7">
    <citation type="journal article" date="2010" name="J. Cell Sci.">
        <title>TRIM8 modulates STAT3 activity through negative regulation of PIAS3.</title>
        <authorList>
            <person name="Okumura F."/>
            <person name="Matsunaga Y."/>
            <person name="Katayama Y."/>
            <person name="Nakayama K.I."/>
            <person name="Hatakeyama S."/>
        </authorList>
    </citation>
    <scope>FUNCTION</scope>
    <scope>SUBCELLULAR LOCATION</scope>
    <scope>INTERACTION WITH PIAS3</scope>
</reference>
<reference key="8">
    <citation type="journal article" date="2011" name="Proc. Natl. Acad. Sci. U.S.A.">
        <title>Tripartite motif 8 (TRIM8) modulates TNFalpha- and IL-1beta-triggered NF-kappaB activation by targeting TAK1 for K63-linked polyubiquitination.</title>
        <authorList>
            <person name="Li Q."/>
            <person name="Yan J."/>
            <person name="Mao A.P."/>
            <person name="Li C."/>
            <person name="Ran Y."/>
            <person name="Shu H.B."/>
            <person name="Wang Y.Y."/>
        </authorList>
    </citation>
    <scope>FUNCTION</scope>
    <scope>INTERACTION WITH MAP3K7</scope>
</reference>
<reference key="9">
    <citation type="journal article" date="2012" name="PLoS ONE">
        <title>Nucleo-cytoplasmic trafficking of TRIM8, a novel oncogene, is involved in positive regulation of TNF induced NF-kappaB pathway.</title>
        <authorList>
            <person name="Tomar D."/>
            <person name="Sripada L."/>
            <person name="Prajapati P."/>
            <person name="Singh R."/>
            <person name="Singh A.K."/>
            <person name="Singh R."/>
        </authorList>
    </citation>
    <scope>FUNCTION</scope>
    <scope>SUBCELLULAR LOCATION</scope>
</reference>
<reference key="10">
    <citation type="journal article" date="2017" name="Hepatology">
        <title>The E3 ligase tripartite motif 8 targets TAK1 to promote insulin resistance and steatohepatitis.</title>
        <authorList>
            <person name="Yan F.J."/>
            <person name="Zhang X.J."/>
            <person name="Wang W.X."/>
            <person name="Ji Y.X."/>
            <person name="Wang P.X."/>
            <person name="Yang Y."/>
            <person name="Gong J."/>
            <person name="Shen L.J."/>
            <person name="Zhu X.Y."/>
            <person name="Huang Z."/>
            <person name="Li H."/>
        </authorList>
    </citation>
    <scope>FUNCTION</scope>
    <scope>INTERACTION WITH MAP3K7</scope>
    <scope>MUTAGENESIS OF CYS-15 AND CYS-18</scope>
</reference>
<reference key="11">
    <citation type="journal article" date="2017" name="J. Immunol.">
        <title>TRIM8 Negatively Regulates TLR3/4-Mediated Innate Immune Response by Blocking TRIF-TBK1 Interaction.</title>
        <authorList>
            <person name="Ye W."/>
            <person name="Hu M.M."/>
            <person name="Lei C.Q."/>
            <person name="Zhou Q."/>
            <person name="Lin H."/>
            <person name="Sun M.S."/>
            <person name="Shu H.B."/>
        </authorList>
    </citation>
    <scope>FUNCTION</scope>
    <scope>INTERACTION WITH TICAM1</scope>
    <scope>MUTAGENESIS OF CYS-15; CYS-18 AND CYS-30</scope>
</reference>
<reference key="12">
    <citation type="journal article" date="2022" name="Cell. Signal.">
        <title>TNF-alpha-induced E3 ligase, TRIM15 inhibits TNF-alpha-regulated NF-kappaB pathway by promoting turnover of K63 linked ubiquitination of TAK1.</title>
        <authorList>
            <person name="Roy M."/>
            <person name="Singh K."/>
            <person name="Shinde A."/>
            <person name="Singh J."/>
            <person name="Mane M."/>
            <person name="Bedekar S."/>
            <person name="Tailor Y."/>
            <person name="Gohel D."/>
            <person name="Vasiyani H."/>
            <person name="Currim F."/>
            <person name="Singh R."/>
        </authorList>
    </citation>
    <scope>FUNCTION</scope>
    <scope>SUBCELLULAR LOCATION</scope>
    <scope>INTERACTION WITH TRIM15</scope>
</reference>
<reference key="13">
    <citation type="journal article" date="2018" name="Am. J. Med. Genet. A">
        <title>Further delineation of the clinical spectrum of de novo TRIM8 truncating mutations.</title>
        <authorList>
            <person name="Assoum M."/>
            <person name="Lines M.A."/>
            <person name="Elpeleg O."/>
            <person name="Darmency V."/>
            <person name="Whiting S."/>
            <person name="Edvardson S."/>
            <person name="Devinsky O."/>
            <person name="Heinzen E."/>
            <person name="Hernan R.R."/>
            <person name="Antignac C."/>
            <person name="Deleuze J.F."/>
            <person name="Des Portes V."/>
            <person name="Bertholet-Thomas A."/>
            <person name="Belot A."/>
            <person name="Geller E."/>
            <person name="Lemesle M."/>
            <person name="Duffourd Y."/>
            <person name="Thauvin-Robinet C."/>
            <person name="Thevenon J."/>
            <person name="Chung W."/>
            <person name="Lowenstein D.H."/>
            <person name="Faivre L."/>
        </authorList>
    </citation>
    <scope>INVOLVEMENT IN FSGSNEDS</scope>
    <scope>VARIANTS FSGSNEDS 423-GLN--SER-551 DEL; 444-SER--SER-551 DEL; 446-TYR--SER-551 DEL AND 459-GLN--SER-551 DEL</scope>
</reference>
<reference key="14">
    <citation type="journal article" date="2020" name="Pediatr. Nephrol.">
        <title>Association of a de novo nonsense mutation of the TRIM8 gene with childhood-onset focal segmental glomerulosclerosis.</title>
        <authorList>
            <person name="Warren M."/>
            <person name="Takeda M."/>
            <person name="Partikian A."/>
            <person name="Opas L."/>
            <person name="Fine R."/>
            <person name="Yano S."/>
        </authorList>
    </citation>
    <scope>VARIANT FSGSNEDS 460-TYR--SER-551 DEL</scope>
</reference>
<reference key="15">
    <citation type="journal article" date="2017" name="Hum. Genet.">
        <title>Heterozygosity for ARID2 loss-of-function mutations in individuals with a Coffin-Siris syndrome-like phenotype.</title>
        <authorList>
            <person name="Bramswig N.C."/>
            <person name="Caluseriu O."/>
            <person name="Luedecke H.J."/>
            <person name="Bolduc F.V."/>
            <person name="Noel N.C."/>
            <person name="Wieland T."/>
            <person name="Surowy H.M."/>
            <person name="Christen H.J."/>
            <person name="Engels H."/>
            <person name="Strom T.M."/>
            <person name="Wieczorek D."/>
        </authorList>
    </citation>
    <scope>VARIANT 445-GLN--SER-551 DEL</scope>
</reference>
<reference key="16">
    <citation type="journal article" date="2021" name="Am. J. Hum. Genet.">
        <title>De novo TRIM8 variants impair its protein localization to nuclear bodies and cause developmental delay, epilepsy, and focal segmental glomerulosclerosis.</title>
        <authorList>
            <consortium name="Undiagnosed Diseases Network"/>
            <consortium name="UCLA Clinical Genomics Center"/>
            <person name="Weng P.L."/>
            <person name="Majmundar A.J."/>
            <person name="Khan K."/>
            <person name="Lim T.Y."/>
            <person name="Shril S."/>
            <person name="Jin G."/>
            <person name="Musgrove J."/>
            <person name="Wang M."/>
            <person name="Ahram D.F."/>
            <person name="Aggarwal V.S."/>
            <person name="Bier L.E."/>
            <person name="Heinzen E.L."/>
            <person name="Onuchic-Whitford A.C."/>
            <person name="Mann N."/>
            <person name="Buerger F."/>
            <person name="Schneider R."/>
            <person name="Deutsch K."/>
            <person name="Kitzler T.M."/>
            <person name="Klaembt V."/>
            <person name="Kolb A."/>
            <person name="Mao Y."/>
            <person name="Moufawad El Achkar C."/>
            <person name="Mitrotti A."/>
            <person name="Martino J."/>
            <person name="Beck B.B."/>
            <person name="Altmueller J."/>
            <person name="Benz M.R."/>
            <person name="Yano S."/>
            <person name="Mikati M.A."/>
            <person name="Gunduz T."/>
            <person name="Cope H."/>
            <person name="Shashi V."/>
            <person name="Trachtman H."/>
            <person name="Bodria M."/>
            <person name="Caridi G."/>
            <person name="Pisani I."/>
            <person name="Fiaccadori E."/>
            <person name="AbuMaziad A.S."/>
            <person name="Martinez-Agosto J.A."/>
            <person name="Yadin O."/>
            <person name="Zuckerman J."/>
            <person name="Kim A."/>
            <person name="John-Kroegel U."/>
            <person name="Tyndall A.V."/>
            <person name="Parboosingh J.S."/>
            <person name="Innes A.M."/>
            <person name="Bierzynska A."/>
            <person name="Koziell A.B."/>
            <person name="Muorah M."/>
            <person name="Saleem M.A."/>
            <person name="Hoefele J."/>
            <person name="Riedhammer K.M."/>
            <person name="Gharavi A.G."/>
            <person name="Jobanputra V."/>
            <person name="Pierce-Hoffman E."/>
            <person name="Seaby E.G."/>
            <person name="O'Donnell-Luria A."/>
            <person name="Rehm H.L."/>
            <person name="Mane S."/>
            <person name="D'Agati V.D."/>
            <person name="Pollak M.R."/>
            <person name="Ghiggeri G.M."/>
            <person name="Lifton R.P."/>
            <person name="Goldstein D.B."/>
            <person name="Davis E.E."/>
            <person name="Hildebrandt F."/>
            <person name="Sanna-Cherchi S."/>
        </authorList>
    </citation>
    <scope>VARIANTS FSGSNEDS 401-GLY--SER-551 DEL; 411-GLN--SER-551 DEL; 414-GLN--SER-551 DEL; 423-GLN--SER-551 DEL; 445-GLN--SER-551 DEL; 459-GLN--SER-551 DEL; 460-TYR--SER-551 DEL AND 487-TYR--SER-551 DEL</scope>
    <scope>CHARACTERIZATION OF VARIANTS FSGSNEDS 411-GLN--SER-551 DEL AND 459-GLN--SER-551 DEL</scope>
    <scope>TISSUE SPECIFICITY</scope>
    <scope>SUBCELLULAR LOCATION</scope>
</reference>
<sequence>MAENWKNCFEEELICPICLHVFVEPVQLPCKHNFCRGCIGEAWAKDSGLVRCPECNQAYNQKPGLEKNLKLTNIVEKFNALHVEKPPAALHCVFCRRGPPLPAQKVCLRCEAPCCQSHVQTHLQQPSTARGHLLVEADDVRAWSCPQHNAYRLYHCEAEQVAVCQYCCYYSGAHQGHSVCDVEIRRNEIRKMLMKQQDRLEEREQDIEDQLYKLESDKRLVEEKVNQLKEEVRLQYEKLHQLLDEDLRQTVEVLDKAQAKFCSENAAQALHLGERMQEAKKLLGSLQLLFDKTEDVSFMKNTKSVKILMDRTQTCTSSSLSPTKIGHLNSKLFLNEVAKKEKQLRKMLEGPFSTPVPFLQSVPLYPCGVSSSGAEKRKHSTAFPEASFLETSSGPVGGQYGAAGTASGEGQSGQPLGPCSSTQHLVALPGGAQPVHSSPVFPPSQYPNGSAAQQPMLPQYGGRKILVCSVDNCYCSSVANHGGHQPYPRSGHFPWTVPSQEYSHPLPPTPSVPQSLPSLAVRDWLDASQQPGHQDFYRVYGQPSTKHYVTS</sequence>
<comment type="function">
    <text evidence="4 5 6 7 10 14">E3 ubiquitin-protein ligase that participates in multiple biological processes including cell survival, differentiation, apoptosis, and in particular, the innate immune response (PubMed:27981609, PubMed:28747347). Participates in the activation of interferon-gamma signaling by promoting proteasomal degradation of the repressor SOCS1 (PubMed:12163497). Plays a positive role in the TNFalpha and IL-1beta signaling pathways. Mechanistically, induces the 'Lys-63'-linked polyubiquitination of MAP3K7/TAK1 component leading to the activation of NF-kappa-B (PubMed:22084099, PubMed:23152791, PubMed:27981609, PubMed:34871740). Also modulates STAT3 activity through negative regulation of PIAS3, either by degradation of PIAS3 through the ubiquitin-proteasome pathway or exclusion of PIAS3 from the nucleus (PubMed:20516148). Negatively regulates TLR3/4-mediated innate immune response by catalyzing 'Lys-6'- and 'Lys-33'-linked polyubiquitination of TICAM1 and thereby disrupting the TICAM1-TBK1 interaction (PubMed:28747347).</text>
</comment>
<comment type="catalytic activity">
    <reaction>
        <text>S-ubiquitinyl-[E2 ubiquitin-conjugating enzyme]-L-cysteine + [acceptor protein]-L-lysine = [E2 ubiquitin-conjugating enzyme]-L-cysteine + N(6)-ubiquitinyl-[acceptor protein]-L-lysine.</text>
        <dbReference type="EC" id="2.3.2.27"/>
    </reaction>
</comment>
<comment type="pathway">
    <text>Protein modification; protein ubiquitination.</text>
</comment>
<comment type="subunit">
    <text evidence="4 5 6 10 14">Homodimer. Interacts with SOCS1 (via) SH2 domain and SOCS box (PubMed:12163497). Interacts with HSP90AB1; prevents nucleus translocation of phosphorylated STAT3 and HSP90AB1. Interacts with MAP3K7/TAK1 (PubMed:22084099). Interacts with PIAS3 (PubMed:20516148). Interacts with TICAM1 (PubMed:28747347). Interacts with TRIM15; this interaction prevents TRIM8 cytoplasmic translocation (PubMed:34871740).</text>
</comment>
<comment type="interaction">
    <interactant intactId="EBI-2340370">
        <id>Q9BZR9</id>
    </interactant>
    <interactant intactId="EBI-744545">
        <id>Q8NEC5</id>
        <label>CATSPER1</label>
    </interactant>
    <organismsDiffer>false</organismsDiffer>
    <experiments>3</experiments>
</comment>
<comment type="interaction">
    <interactant intactId="EBI-2340370">
        <id>Q9BZR9</id>
    </interactant>
    <interactant intactId="EBI-740086">
        <id>Q96GG9</id>
        <label>DCUN1D1</label>
    </interactant>
    <organismsDiffer>false</organismsDiffer>
    <experiments>3</experiments>
</comment>
<comment type="interaction">
    <interactant intactId="EBI-2340370">
        <id>Q9BZR9</id>
    </interactant>
    <interactant intactId="EBI-11986315">
        <id>Q9H5Z6-2</id>
        <label>FAM124B</label>
    </interactant>
    <organismsDiffer>false</organismsDiffer>
    <experiments>3</experiments>
</comment>
<comment type="interaction">
    <interactant intactId="EBI-2340370">
        <id>Q9BZR9</id>
    </interactant>
    <interactant intactId="EBI-740785">
        <id>P49639</id>
        <label>HOXA1</label>
    </interactant>
    <organismsDiffer>false</organismsDiffer>
    <experiments>3</experiments>
</comment>
<comment type="interaction">
    <interactant intactId="EBI-2340370">
        <id>Q9BZR9</id>
    </interactant>
    <interactant intactId="EBI-739832">
        <id>Q8TBB1</id>
        <label>LNX1</label>
    </interactant>
    <organismsDiffer>false</organismsDiffer>
    <experiments>5</experiments>
</comment>
<comment type="interaction">
    <interactant intactId="EBI-2340370">
        <id>Q9BZR9</id>
    </interactant>
    <interactant intactId="EBI-2341787">
        <id>Q17RB8</id>
        <label>LONRF1</label>
    </interactant>
    <organismsDiffer>false</organismsDiffer>
    <experiments>3</experiments>
</comment>
<comment type="interaction">
    <interactant intactId="EBI-2340370">
        <id>Q9BZR9</id>
    </interactant>
    <interactant intactId="EBI-11980301">
        <id>Q8N3F0</id>
        <label>MTURN</label>
    </interactant>
    <organismsDiffer>false</organismsDiffer>
    <experiments>7</experiments>
</comment>
<comment type="interaction">
    <interactant intactId="EBI-2340370">
        <id>Q9BZR9</id>
    </interactant>
    <interactant intactId="EBI-726826">
        <id>Q8NFP7</id>
        <label>NUDT10</label>
    </interactant>
    <organismsDiffer>false</organismsDiffer>
    <experiments>3</experiments>
</comment>
<comment type="interaction">
    <interactant intactId="EBI-2340370">
        <id>Q9BZR9</id>
    </interactant>
    <interactant intactId="EBI-746259">
        <id>Q96DC9</id>
        <label>OTUB2</label>
    </interactant>
    <organismsDiffer>false</organismsDiffer>
    <experiments>7</experiments>
</comment>
<comment type="interaction">
    <interactant intactId="EBI-2340370">
        <id>Q9BZR9</id>
    </interactant>
    <interactant intactId="EBI-746453">
        <id>P54725</id>
        <label>RAD23A</label>
    </interactant>
    <organismsDiffer>false</organismsDiffer>
    <experiments>3</experiments>
</comment>
<comment type="interaction">
    <interactant intactId="EBI-2340370">
        <id>Q9BZR9</id>
    </interactant>
    <interactant intactId="EBI-914207">
        <id>Q8IYW5</id>
        <label>RNF168</label>
    </interactant>
    <organismsDiffer>false</organismsDiffer>
    <experiments>3</experiments>
</comment>
<comment type="interaction">
    <interactant intactId="EBI-2340370">
        <id>Q9BZR9</id>
    </interactant>
    <interactant intactId="EBI-372899">
        <id>Q13148</id>
        <label>TARDBP</label>
    </interactant>
    <organismsDiffer>false</organismsDiffer>
    <experiments>3</experiments>
</comment>
<comment type="interaction">
    <interactant intactId="EBI-2340370">
        <id>Q9BZR9</id>
    </interactant>
    <interactant intactId="EBI-2509913">
        <id>Q96KP6</id>
        <label>TNIP3</label>
    </interactant>
    <organismsDiffer>false</organismsDiffer>
    <experiments>3</experiments>
</comment>
<comment type="interaction">
    <interactant intactId="EBI-2340370">
        <id>Q9BZR9</id>
    </interactant>
    <interactant intactId="EBI-12076664">
        <id>O14787-2</id>
        <label>TNPO2</label>
    </interactant>
    <organismsDiffer>false</organismsDiffer>
    <experiments>3</experiments>
</comment>
<comment type="interaction">
    <interactant intactId="EBI-2340370">
        <id>Q9BZR9</id>
    </interactant>
    <interactant intactId="EBI-949753">
        <id>Q63HR2</id>
        <label>TNS2</label>
    </interactant>
    <organismsDiffer>false</organismsDiffer>
    <experiments>3</experiments>
</comment>
<comment type="interaction">
    <interactant intactId="EBI-2340370">
        <id>Q9BZR9</id>
    </interactant>
    <interactant intactId="EBI-2340370">
        <id>Q9BZR9</id>
        <label>TRIM8</label>
    </interactant>
    <organismsDiffer>false</organismsDiffer>
    <experiments>3</experiments>
</comment>
<comment type="interaction">
    <interactant intactId="EBI-2340370">
        <id>Q9BZR9</id>
    </interactant>
    <interactant intactId="EBI-7353612">
        <id>P57075-2</id>
        <label>UBASH3A</label>
    </interactant>
    <organismsDiffer>false</organismsDiffer>
    <experiments>5</experiments>
</comment>
<comment type="interaction">
    <interactant intactId="EBI-2340370">
        <id>Q9BZR9</id>
    </interactant>
    <interactant intactId="EBI-743540">
        <id>P51668</id>
        <label>UBE2D1</label>
    </interactant>
    <organismsDiffer>false</organismsDiffer>
    <experiments>4</experiments>
</comment>
<comment type="interaction">
    <interactant intactId="EBI-2340370">
        <id>Q9BZR9</id>
    </interactant>
    <interactant intactId="EBI-745527">
        <id>Q9Y2X8</id>
        <label>UBE2D4</label>
    </interactant>
    <organismsDiffer>false</organismsDiffer>
    <experiments>4</experiments>
</comment>
<comment type="interaction">
    <interactant intactId="EBI-2340370">
        <id>Q9BZR9</id>
    </interactant>
    <interactant intactId="EBI-2129974">
        <id>O14933</id>
        <label>UBE2L6</label>
    </interactant>
    <organismsDiffer>false</organismsDiffer>
    <experiments>4</experiments>
</comment>
<comment type="interaction">
    <interactant intactId="EBI-2340370">
        <id>Q9BZR9</id>
    </interactant>
    <interactant intactId="EBI-1993627">
        <id>O94888</id>
        <label>UBXN7</label>
    </interactant>
    <organismsDiffer>false</organismsDiffer>
    <experiments>3</experiments>
</comment>
<comment type="interaction">
    <interactant intactId="EBI-2340370">
        <id>Q9BZR9</id>
    </interactant>
    <interactant intactId="EBI-12072186">
        <id>P45974-2</id>
        <label>USP5</label>
    </interactant>
    <organismsDiffer>false</organismsDiffer>
    <experiments>3</experiments>
</comment>
<comment type="interaction">
    <interactant intactId="EBI-2340370">
        <id>Q9BZR9</id>
    </interactant>
    <interactant intactId="EBI-2510804">
        <id>Q5VVQ6</id>
        <label>YOD1</label>
    </interactant>
    <organismsDiffer>false</organismsDiffer>
    <experiments>3</experiments>
</comment>
<comment type="subcellular location">
    <subcellularLocation>
        <location evidence="7 14">Cytoplasm</location>
    </subcellularLocation>
    <subcellularLocation>
        <location evidence="7 14">Nucleus</location>
    </subcellularLocation>
    <subcellularLocation>
        <location evidence="13">Nucleus</location>
        <location evidence="13">Nuclear body</location>
    </subcellularLocation>
    <text evidence="7">Nucleo-cytoplasmic translocation is involved in regulation of NF-kappa-B.</text>
</comment>
<comment type="tissue specificity">
    <text evidence="13 15">Widely expressed. Expressed in glomerular podocytes of kidneys.</text>
</comment>
<comment type="domain">
    <text>The coiled coil domain is required for homodimerization.</text>
</comment>
<comment type="domain">
    <text evidence="1">The region immediately C-terminal to the RING motif is sufficient to mediate the interaction with SOCS1.</text>
</comment>
<comment type="disease" evidence="11 12 13">
    <disease id="DI-06177">
        <name>Focal segmental glomerulosclerosis and neurodevelopmental syndrome</name>
        <acronym>FSGSNEDS</acronym>
        <description>An autosomal dominant disorder characterized by global developmental delay associated with variable features of focal segmental glomerulosclerosis, a renal pathology defined by the presence of segmental sclerosis in glomeruli and resulting in proteinuria, reduced glomerular filtration rate and progressive decline in renal function. Some patients have transient proteinuria and others require renal transplant. Neurodevelopmental features are also variable, with some patients having only mildly impaired intellectual development, and others having a severe developmental disorder associated with early-onset refractory seizures or epileptic encephalopathy. Additional features, including feeding difficulties, poor overall growth, and non-specific dysmorphic facial features, are commonly observed.</description>
        <dbReference type="MIM" id="619428"/>
    </disease>
    <text>The disease is caused by variants affecting the gene represented in this entry.</text>
</comment>
<comment type="similarity">
    <text evidence="15">Belongs to the TRIM/RBCC family.</text>
</comment>
<gene>
    <name type="primary">TRIM8</name>
    <name type="synonym">GERP</name>
    <name type="synonym">RNF27</name>
</gene>
<dbReference type="EC" id="2.3.2.27"/>
<dbReference type="EMBL" id="AF281046">
    <property type="protein sequence ID" value="AAG53087.1"/>
    <property type="molecule type" value="mRNA"/>
</dbReference>
<dbReference type="EMBL" id="AF220034">
    <property type="protein sequence ID" value="AAG53488.1"/>
    <property type="molecule type" value="mRNA"/>
</dbReference>
<dbReference type="EMBL" id="AL391121">
    <property type="status" value="NOT_ANNOTATED_CDS"/>
    <property type="molecule type" value="Genomic_DNA"/>
</dbReference>
<dbReference type="EMBL" id="CH471066">
    <property type="protein sequence ID" value="EAW49680.1"/>
    <property type="molecule type" value="Genomic_DNA"/>
</dbReference>
<dbReference type="EMBL" id="BC021925">
    <property type="protein sequence ID" value="AAH21925.1"/>
    <property type="molecule type" value="mRNA"/>
</dbReference>
<dbReference type="CCDS" id="CCDS31274.1"/>
<dbReference type="PIR" id="JC7562">
    <property type="entry name" value="JC7562"/>
</dbReference>
<dbReference type="RefSeq" id="NP_112174.2">
    <property type="nucleotide sequence ID" value="NM_030912.3"/>
</dbReference>
<dbReference type="SMR" id="Q9BZR9"/>
<dbReference type="BioGRID" id="123541">
    <property type="interactions" value="98"/>
</dbReference>
<dbReference type="FunCoup" id="Q9BZR9">
    <property type="interactions" value="2484"/>
</dbReference>
<dbReference type="IntAct" id="Q9BZR9">
    <property type="interactions" value="73"/>
</dbReference>
<dbReference type="STRING" id="9606.ENSP00000496301"/>
<dbReference type="MoonDB" id="Q9BZR9">
    <property type="type" value="Predicted"/>
</dbReference>
<dbReference type="GlyGen" id="Q9BZR9">
    <property type="glycosylation" value="1 site"/>
</dbReference>
<dbReference type="iPTMnet" id="Q9BZR9"/>
<dbReference type="PhosphoSitePlus" id="Q9BZR9"/>
<dbReference type="BioMuta" id="TRIM8"/>
<dbReference type="DMDM" id="18202744"/>
<dbReference type="jPOST" id="Q9BZR9"/>
<dbReference type="MassIVE" id="Q9BZR9"/>
<dbReference type="PaxDb" id="9606-ENSP00000302120"/>
<dbReference type="PeptideAtlas" id="Q9BZR9"/>
<dbReference type="ProteomicsDB" id="79898"/>
<dbReference type="Antibodypedia" id="31471">
    <property type="antibodies" value="164 antibodies from 28 providers"/>
</dbReference>
<dbReference type="DNASU" id="81603"/>
<dbReference type="Ensembl" id="ENST00000643721.2">
    <property type="protein sequence ID" value="ENSP00000496301.1"/>
    <property type="gene ID" value="ENSG00000171206.17"/>
</dbReference>
<dbReference type="Ensembl" id="ENST00000710327.1">
    <property type="protein sequence ID" value="ENSP00000518207.1"/>
    <property type="gene ID" value="ENSG00000171206.17"/>
</dbReference>
<dbReference type="GeneID" id="81603"/>
<dbReference type="KEGG" id="hsa:81603"/>
<dbReference type="MANE-Select" id="ENST00000643721.2">
    <property type="protein sequence ID" value="ENSP00000496301.1"/>
    <property type="RefSeq nucleotide sequence ID" value="NM_030912.3"/>
    <property type="RefSeq protein sequence ID" value="NP_112174.2"/>
</dbReference>
<dbReference type="UCSC" id="uc001kvz.3">
    <property type="organism name" value="human"/>
</dbReference>
<dbReference type="AGR" id="HGNC:15579"/>
<dbReference type="CTD" id="81603"/>
<dbReference type="DisGeNET" id="81603"/>
<dbReference type="GeneCards" id="TRIM8"/>
<dbReference type="HGNC" id="HGNC:15579">
    <property type="gene designation" value="TRIM8"/>
</dbReference>
<dbReference type="HPA" id="ENSG00000171206">
    <property type="expression patterns" value="Low tissue specificity"/>
</dbReference>
<dbReference type="MalaCards" id="TRIM8"/>
<dbReference type="MIM" id="606125">
    <property type="type" value="gene"/>
</dbReference>
<dbReference type="MIM" id="619428">
    <property type="type" value="phenotype"/>
</dbReference>
<dbReference type="neXtProt" id="NX_Q9BZR9"/>
<dbReference type="OpenTargets" id="ENSG00000171206"/>
<dbReference type="Orphanet" id="1934">
    <property type="disease" value="Early infantile developmental and epileptic encephalopathy"/>
</dbReference>
<dbReference type="PharmGKB" id="PA37983"/>
<dbReference type="VEuPathDB" id="HostDB:ENSG00000171206"/>
<dbReference type="eggNOG" id="KOG2177">
    <property type="taxonomic scope" value="Eukaryota"/>
</dbReference>
<dbReference type="GeneTree" id="ENSGT00940000157919"/>
<dbReference type="HOGENOM" id="CLU_036491_0_0_1"/>
<dbReference type="InParanoid" id="Q9BZR9"/>
<dbReference type="OrthoDB" id="1630758at2759"/>
<dbReference type="PAN-GO" id="Q9BZR9">
    <property type="GO annotations" value="0 GO annotations based on evolutionary models"/>
</dbReference>
<dbReference type="PhylomeDB" id="Q9BZR9"/>
<dbReference type="TreeFam" id="TF333491"/>
<dbReference type="PathwayCommons" id="Q9BZR9"/>
<dbReference type="Reactome" id="R-HSA-877300">
    <property type="pathway name" value="Interferon gamma signaling"/>
</dbReference>
<dbReference type="SignaLink" id="Q9BZR9"/>
<dbReference type="SIGNOR" id="Q9BZR9"/>
<dbReference type="UniPathway" id="UPA00143"/>
<dbReference type="BioGRID-ORCS" id="81603">
    <property type="hits" value="21 hits in 1207 CRISPR screens"/>
</dbReference>
<dbReference type="ChiTaRS" id="TRIM8">
    <property type="organism name" value="human"/>
</dbReference>
<dbReference type="GenomeRNAi" id="81603"/>
<dbReference type="Pharos" id="Q9BZR9">
    <property type="development level" value="Tbio"/>
</dbReference>
<dbReference type="PRO" id="PR:Q9BZR9"/>
<dbReference type="Proteomes" id="UP000005640">
    <property type="component" value="Chromosome 10"/>
</dbReference>
<dbReference type="RNAct" id="Q9BZR9">
    <property type="molecule type" value="protein"/>
</dbReference>
<dbReference type="Bgee" id="ENSG00000171206">
    <property type="expression patterns" value="Expressed in endothelial cell and 204 other cell types or tissues"/>
</dbReference>
<dbReference type="ExpressionAtlas" id="Q9BZR9">
    <property type="expression patterns" value="baseline and differential"/>
</dbReference>
<dbReference type="GO" id="GO:0005737">
    <property type="term" value="C:cytoplasm"/>
    <property type="evidence" value="ECO:0000314"/>
    <property type="project" value="UniProt"/>
</dbReference>
<dbReference type="GO" id="GO:0005829">
    <property type="term" value="C:cytosol"/>
    <property type="evidence" value="ECO:0000304"/>
    <property type="project" value="Reactome"/>
</dbReference>
<dbReference type="GO" id="GO:0005634">
    <property type="term" value="C:nucleus"/>
    <property type="evidence" value="ECO:0000315"/>
    <property type="project" value="UniProtKB"/>
</dbReference>
<dbReference type="GO" id="GO:0016605">
    <property type="term" value="C:PML body"/>
    <property type="evidence" value="ECO:0000314"/>
    <property type="project" value="UniProtKB"/>
</dbReference>
<dbReference type="GO" id="GO:0042802">
    <property type="term" value="F:identical protein binding"/>
    <property type="evidence" value="ECO:0000353"/>
    <property type="project" value="IntAct"/>
</dbReference>
<dbReference type="GO" id="GO:0042803">
    <property type="term" value="F:protein homodimerization activity"/>
    <property type="evidence" value="ECO:0000353"/>
    <property type="project" value="UniProtKB"/>
</dbReference>
<dbReference type="GO" id="GO:0003713">
    <property type="term" value="F:transcription coactivator activity"/>
    <property type="evidence" value="ECO:0000314"/>
    <property type="project" value="ARUK-UCL"/>
</dbReference>
<dbReference type="GO" id="GO:0061630">
    <property type="term" value="F:ubiquitin protein ligase activity"/>
    <property type="evidence" value="ECO:0000314"/>
    <property type="project" value="UniProt"/>
</dbReference>
<dbReference type="GO" id="GO:0008270">
    <property type="term" value="F:zinc ion binding"/>
    <property type="evidence" value="ECO:0000303"/>
    <property type="project" value="UniProtKB"/>
</dbReference>
<dbReference type="GO" id="GO:0007249">
    <property type="term" value="P:canonical NF-kappaB signal transduction"/>
    <property type="evidence" value="ECO:0000314"/>
    <property type="project" value="UniProt"/>
</dbReference>
<dbReference type="GO" id="GO:0046597">
    <property type="term" value="P:host-mediated suppression of symbiont invasion"/>
    <property type="evidence" value="ECO:0007669"/>
    <property type="project" value="Ensembl"/>
</dbReference>
<dbReference type="GO" id="GO:0045087">
    <property type="term" value="P:innate immune response"/>
    <property type="evidence" value="ECO:0000314"/>
    <property type="project" value="UniProtKB"/>
</dbReference>
<dbReference type="GO" id="GO:0032897">
    <property type="term" value="P:negative regulation of viral transcription"/>
    <property type="evidence" value="ECO:0007669"/>
    <property type="project" value="Ensembl"/>
</dbReference>
<dbReference type="GO" id="GO:0010508">
    <property type="term" value="P:positive regulation of autophagy"/>
    <property type="evidence" value="ECO:0000315"/>
    <property type="project" value="UniProtKB"/>
</dbReference>
<dbReference type="GO" id="GO:0043123">
    <property type="term" value="P:positive regulation of canonical NF-kappaB signal transduction"/>
    <property type="evidence" value="ECO:0000314"/>
    <property type="project" value="UniProtKB"/>
</dbReference>
<dbReference type="GO" id="GO:0051091">
    <property type="term" value="P:positive regulation of DNA-binding transcription factor activity"/>
    <property type="evidence" value="ECO:0000314"/>
    <property type="project" value="UniProtKB"/>
</dbReference>
<dbReference type="GO" id="GO:0051092">
    <property type="term" value="P:positive regulation of NF-kappaB transcription factor activity"/>
    <property type="evidence" value="ECO:0000314"/>
    <property type="project" value="UniProtKB"/>
</dbReference>
<dbReference type="GO" id="GO:1900182">
    <property type="term" value="P:positive regulation of protein localization to nucleus"/>
    <property type="evidence" value="ECO:0007669"/>
    <property type="project" value="Ensembl"/>
</dbReference>
<dbReference type="GO" id="GO:0070534">
    <property type="term" value="P:protein K63-linked ubiquitination"/>
    <property type="evidence" value="ECO:0000314"/>
    <property type="project" value="UniProt"/>
</dbReference>
<dbReference type="GO" id="GO:0019827">
    <property type="term" value="P:stem cell population maintenance"/>
    <property type="evidence" value="ECO:0007669"/>
    <property type="project" value="Ensembl"/>
</dbReference>
<dbReference type="GO" id="GO:0044790">
    <property type="term" value="P:suppression of viral release by host"/>
    <property type="evidence" value="ECO:0000314"/>
    <property type="project" value="UniProtKB"/>
</dbReference>
<dbReference type="CDD" id="cd19838">
    <property type="entry name" value="Bbox1_TRIM8_C-V"/>
    <property type="match status" value="1"/>
</dbReference>
<dbReference type="CDD" id="cd19763">
    <property type="entry name" value="Bbox2_TRIM8_C-V"/>
    <property type="match status" value="1"/>
</dbReference>
<dbReference type="CDD" id="cd16580">
    <property type="entry name" value="RING-HC_TRIM8_C-V"/>
    <property type="match status" value="1"/>
</dbReference>
<dbReference type="FunFam" id="3.30.40.10:FF:000290">
    <property type="entry name" value="probable E3 ubiquitin-protein ligase TRIM8"/>
    <property type="match status" value="1"/>
</dbReference>
<dbReference type="Gene3D" id="3.30.160.60">
    <property type="entry name" value="Classic Zinc Finger"/>
    <property type="match status" value="1"/>
</dbReference>
<dbReference type="Gene3D" id="3.30.40.10">
    <property type="entry name" value="Zinc/RING finger domain, C3HC4 (zinc finger)"/>
    <property type="match status" value="1"/>
</dbReference>
<dbReference type="InterPro" id="IPR051051">
    <property type="entry name" value="E3_ubiq-ligase_TRIM/RNF"/>
</dbReference>
<dbReference type="InterPro" id="IPR027370">
    <property type="entry name" value="Znf-RING_euk"/>
</dbReference>
<dbReference type="InterPro" id="IPR001841">
    <property type="entry name" value="Znf_RING"/>
</dbReference>
<dbReference type="InterPro" id="IPR013083">
    <property type="entry name" value="Znf_RING/FYVE/PHD"/>
</dbReference>
<dbReference type="InterPro" id="IPR017907">
    <property type="entry name" value="Znf_RING_CS"/>
</dbReference>
<dbReference type="PANTHER" id="PTHR25465">
    <property type="entry name" value="B-BOX DOMAIN CONTAINING"/>
    <property type="match status" value="1"/>
</dbReference>
<dbReference type="PANTHER" id="PTHR25465:SF19">
    <property type="entry name" value="E3 UBIQUITIN-PROTEIN LIGASE TRIM8"/>
    <property type="match status" value="1"/>
</dbReference>
<dbReference type="Pfam" id="PF13445">
    <property type="entry name" value="zf-RING_UBOX"/>
    <property type="match status" value="1"/>
</dbReference>
<dbReference type="SMART" id="SM00184">
    <property type="entry name" value="RING"/>
    <property type="match status" value="1"/>
</dbReference>
<dbReference type="SUPFAM" id="SSF57845">
    <property type="entry name" value="B-box zinc-binding domain"/>
    <property type="match status" value="1"/>
</dbReference>
<dbReference type="SUPFAM" id="SSF57850">
    <property type="entry name" value="RING/U-box"/>
    <property type="match status" value="1"/>
</dbReference>
<dbReference type="PROSITE" id="PS00518">
    <property type="entry name" value="ZF_RING_1"/>
    <property type="match status" value="1"/>
</dbReference>
<dbReference type="PROSITE" id="PS50089">
    <property type="entry name" value="ZF_RING_2"/>
    <property type="match status" value="1"/>
</dbReference>
<organism>
    <name type="scientific">Homo sapiens</name>
    <name type="common">Human</name>
    <dbReference type="NCBI Taxonomy" id="9606"/>
    <lineage>
        <taxon>Eukaryota</taxon>
        <taxon>Metazoa</taxon>
        <taxon>Chordata</taxon>
        <taxon>Craniata</taxon>
        <taxon>Vertebrata</taxon>
        <taxon>Euteleostomi</taxon>
        <taxon>Mammalia</taxon>
        <taxon>Eutheria</taxon>
        <taxon>Euarchontoglires</taxon>
        <taxon>Primates</taxon>
        <taxon>Haplorrhini</taxon>
        <taxon>Catarrhini</taxon>
        <taxon>Hominidae</taxon>
        <taxon>Homo</taxon>
    </lineage>
</organism>
<feature type="chain" id="PRO_0000056206" description="E3 ubiquitin-protein ligase TRIM8">
    <location>
        <begin position="1"/>
        <end position="551"/>
    </location>
</feature>
<feature type="zinc finger region" description="RING-type" evidence="3">
    <location>
        <begin position="15"/>
        <end position="56"/>
    </location>
</feature>
<feature type="zinc finger region" description="B box-type 1">
    <location>
        <begin position="92"/>
        <end position="132"/>
    </location>
</feature>
<feature type="zinc finger region" description="B box-type 2">
    <location>
        <begin position="140"/>
        <end position="182"/>
    </location>
</feature>
<feature type="coiled-coil region" evidence="2">
    <location>
        <begin position="181"/>
        <end position="249"/>
    </location>
</feature>
<feature type="sequence variant" id="VAR_086209" description="In FSGSNEDS." evidence="13">
    <location>
        <begin position="401"/>
        <end position="551"/>
    </location>
</feature>
<feature type="sequence variant" id="VAR_086210" description="In FSGSNEDS; disrupts localization to nuclear bodies." evidence="13">
    <location>
        <begin position="411"/>
        <end position="551"/>
    </location>
</feature>
<feature type="sequence variant" id="VAR_086211" description="In FSGSNEDS." evidence="13">
    <location>
        <begin position="414"/>
        <end position="551"/>
    </location>
</feature>
<feature type="sequence variant" id="VAR_086212" description="In FSGSNEDS." evidence="11 13">
    <location>
        <begin position="423"/>
        <end position="551"/>
    </location>
</feature>
<feature type="sequence variant" id="VAR_086213" description="In FSGSNEDS." evidence="11">
    <location>
        <begin position="444"/>
        <end position="551"/>
    </location>
</feature>
<feature type="sequence variant" id="VAR_080568" description="In FSGSNEDS; also found in a patient with Coffin-Siris syndrome carrying a likely causative ARID2 mutation." evidence="9 13">
    <location>
        <begin position="445"/>
        <end position="551"/>
    </location>
</feature>
<feature type="sequence variant" id="VAR_086214" description="In FSGSNEDS." evidence="11">
    <location>
        <begin position="446"/>
        <end position="551"/>
    </location>
</feature>
<feature type="sequence variant" id="VAR_086215" description="In FSGSNEDS; disrupts localization to nuclear bodies." evidence="11 13">
    <location>
        <begin position="459"/>
        <end position="551"/>
    </location>
</feature>
<feature type="sequence variant" id="VAR_086216" description="In FSGSNEDS." evidence="12 13">
    <location>
        <begin position="460"/>
        <end position="551"/>
    </location>
</feature>
<feature type="sequence variant" id="VAR_086217" description="In FSGSNEDS." evidence="13">
    <location>
        <begin position="487"/>
        <end position="551"/>
    </location>
</feature>
<feature type="mutagenesis site" description="Complete loss of ubiquitination activity on MAP3K7/TAK1." evidence="8">
    <original>C</original>
    <variation>A</variation>
    <location>
        <position position="15"/>
    </location>
</feature>
<feature type="mutagenesis site" description="Complete loss of ubiquitination activity on TICAM1." evidence="10">
    <original>C</original>
    <variation>S</variation>
    <location>
        <position position="15"/>
    </location>
</feature>
<feature type="mutagenesis site" description="Complete loss of ubiquitination activity on MAP3K7/TAK1." evidence="8">
    <original>C</original>
    <variation>A</variation>
    <location>
        <position position="18"/>
    </location>
</feature>
<feature type="mutagenesis site" description="Complete loss of ubiquitination activity on TICAM1." evidence="10">
    <original>C</original>
    <variation>S</variation>
    <location>
        <position position="18"/>
    </location>
</feature>
<feature type="mutagenesis site" description="Complete loss of ubiquitination activity on TICAM1." evidence="10">
    <original>C</original>
    <variation>S</variation>
    <location>
        <position position="30"/>
    </location>
</feature>
<feature type="sequence conflict" description="In Ref. 1; AAG53087." evidence="15" ref="1">
    <original>H</original>
    <variation>R</variation>
    <location>
        <position position="174"/>
    </location>
</feature>
<proteinExistence type="evidence at protein level"/>
<name>TRIM8_HUMAN</name>